<feature type="chain" id="PRO_1000056831" description="Nucleotide-binding protein LGAS_1315">
    <location>
        <begin position="1"/>
        <end position="291"/>
    </location>
</feature>
<feature type="binding site" evidence="1">
    <location>
        <begin position="13"/>
        <end position="20"/>
    </location>
    <ligand>
        <name>ATP</name>
        <dbReference type="ChEBI" id="CHEBI:30616"/>
    </ligand>
</feature>
<feature type="binding site" evidence="1">
    <location>
        <begin position="63"/>
        <end position="66"/>
    </location>
    <ligand>
        <name>GTP</name>
        <dbReference type="ChEBI" id="CHEBI:37565"/>
    </ligand>
</feature>
<reference key="1">
    <citation type="journal article" date="2006" name="Proc. Natl. Acad. Sci. U.S.A.">
        <title>Comparative genomics of the lactic acid bacteria.</title>
        <authorList>
            <person name="Makarova K.S."/>
            <person name="Slesarev A."/>
            <person name="Wolf Y.I."/>
            <person name="Sorokin A."/>
            <person name="Mirkin B."/>
            <person name="Koonin E.V."/>
            <person name="Pavlov A."/>
            <person name="Pavlova N."/>
            <person name="Karamychev V."/>
            <person name="Polouchine N."/>
            <person name="Shakhova V."/>
            <person name="Grigoriev I."/>
            <person name="Lou Y."/>
            <person name="Rohksar D."/>
            <person name="Lucas S."/>
            <person name="Huang K."/>
            <person name="Goodstein D.M."/>
            <person name="Hawkins T."/>
            <person name="Plengvidhya V."/>
            <person name="Welker D."/>
            <person name="Hughes J."/>
            <person name="Goh Y."/>
            <person name="Benson A."/>
            <person name="Baldwin K."/>
            <person name="Lee J.-H."/>
            <person name="Diaz-Muniz I."/>
            <person name="Dosti B."/>
            <person name="Smeianov V."/>
            <person name="Wechter W."/>
            <person name="Barabote R."/>
            <person name="Lorca G."/>
            <person name="Altermann E."/>
            <person name="Barrangou R."/>
            <person name="Ganesan B."/>
            <person name="Xie Y."/>
            <person name="Rawsthorne H."/>
            <person name="Tamir D."/>
            <person name="Parker C."/>
            <person name="Breidt F."/>
            <person name="Broadbent J.R."/>
            <person name="Hutkins R."/>
            <person name="O'Sullivan D."/>
            <person name="Steele J."/>
            <person name="Unlu G."/>
            <person name="Saier M.H. Jr."/>
            <person name="Klaenhammer T."/>
            <person name="Richardson P."/>
            <person name="Kozyavkin S."/>
            <person name="Weimer B.C."/>
            <person name="Mills D.A."/>
        </authorList>
    </citation>
    <scope>NUCLEOTIDE SEQUENCE [LARGE SCALE GENOMIC DNA]</scope>
    <source>
        <strain>ATCC 33323 / DSM 20243 / BCRC 14619 / CIP 102991 / JCM 1131 / KCTC 3163 / NCIMB 11718 / NCTC 13722 / AM63</strain>
    </source>
</reference>
<evidence type="ECO:0000255" key="1">
    <source>
        <dbReference type="HAMAP-Rule" id="MF_00636"/>
    </source>
</evidence>
<comment type="function">
    <text evidence="1">Displays ATPase and GTPase activities.</text>
</comment>
<comment type="similarity">
    <text evidence="1">Belongs to the RapZ-like family.</text>
</comment>
<gene>
    <name type="ordered locus">LGAS_1315</name>
</gene>
<name>Y1315_LACGA</name>
<accession>Q042E5</accession>
<sequence>MAEQKKQLLIVTGMSGAGKTVAIKALEDMGYFVVDNLPPELLGSFWELINNSSDFSKAAVVVDLRVKSFYKDLVDEIKSLEDSQNVQSTVLFLDASDDVLVSRYKETRRLPPLAHTGRLLDGIQEERAILSRTKNISNIIIDTSRLTTKELKAKLVDKFGDNQTRTFSIEVMSFGFKYGIPIDADIVMDVRFLPNPFYIPQLKPFTGLDRRVFDYVMSKKETKKFYAKFLDMLETAIPGYIAEGKEKLTIAIGCTGGQHRSVSIARQLAVDLAKKYPVDISHREISRYIGQ</sequence>
<keyword id="KW-0067">ATP-binding</keyword>
<keyword id="KW-0342">GTP-binding</keyword>
<keyword id="KW-0547">Nucleotide-binding</keyword>
<proteinExistence type="inferred from homology"/>
<dbReference type="EMBL" id="CP000413">
    <property type="protein sequence ID" value="ABJ60677.1"/>
    <property type="molecule type" value="Genomic_DNA"/>
</dbReference>
<dbReference type="SMR" id="Q042E5"/>
<dbReference type="KEGG" id="lga:LGAS_1315"/>
<dbReference type="HOGENOM" id="CLU_059558_0_0_9"/>
<dbReference type="BioCyc" id="LGAS324831:G1G6Y-1309-MONOMER"/>
<dbReference type="Proteomes" id="UP000000664">
    <property type="component" value="Chromosome"/>
</dbReference>
<dbReference type="GO" id="GO:0005524">
    <property type="term" value="F:ATP binding"/>
    <property type="evidence" value="ECO:0007669"/>
    <property type="project" value="UniProtKB-UniRule"/>
</dbReference>
<dbReference type="GO" id="GO:0005525">
    <property type="term" value="F:GTP binding"/>
    <property type="evidence" value="ECO:0007669"/>
    <property type="project" value="UniProtKB-UniRule"/>
</dbReference>
<dbReference type="Gene3D" id="3.40.50.300">
    <property type="entry name" value="P-loop containing nucleotide triphosphate hydrolases"/>
    <property type="match status" value="1"/>
</dbReference>
<dbReference type="HAMAP" id="MF_00636">
    <property type="entry name" value="RapZ_like"/>
    <property type="match status" value="1"/>
</dbReference>
<dbReference type="InterPro" id="IPR027417">
    <property type="entry name" value="P-loop_NTPase"/>
</dbReference>
<dbReference type="InterPro" id="IPR005337">
    <property type="entry name" value="RapZ-like"/>
</dbReference>
<dbReference type="InterPro" id="IPR053930">
    <property type="entry name" value="RapZ-like_N"/>
</dbReference>
<dbReference type="InterPro" id="IPR053931">
    <property type="entry name" value="RapZ_C"/>
</dbReference>
<dbReference type="NCBIfam" id="NF003828">
    <property type="entry name" value="PRK05416.1"/>
    <property type="match status" value="1"/>
</dbReference>
<dbReference type="PANTHER" id="PTHR30448">
    <property type="entry name" value="RNASE ADAPTER PROTEIN RAPZ"/>
    <property type="match status" value="1"/>
</dbReference>
<dbReference type="PANTHER" id="PTHR30448:SF0">
    <property type="entry name" value="RNASE ADAPTER PROTEIN RAPZ"/>
    <property type="match status" value="1"/>
</dbReference>
<dbReference type="Pfam" id="PF22740">
    <property type="entry name" value="PapZ_C"/>
    <property type="match status" value="1"/>
</dbReference>
<dbReference type="Pfam" id="PF03668">
    <property type="entry name" value="RapZ-like_N"/>
    <property type="match status" value="1"/>
</dbReference>
<dbReference type="PIRSF" id="PIRSF005052">
    <property type="entry name" value="P-loopkin"/>
    <property type="match status" value="1"/>
</dbReference>
<dbReference type="SUPFAM" id="SSF52540">
    <property type="entry name" value="P-loop containing nucleoside triphosphate hydrolases"/>
    <property type="match status" value="1"/>
</dbReference>
<protein>
    <recommendedName>
        <fullName evidence="1">Nucleotide-binding protein LGAS_1315</fullName>
    </recommendedName>
</protein>
<organism>
    <name type="scientific">Lactobacillus gasseri (strain ATCC 33323 / DSM 20243 / BCRC 14619 / CIP 102991 / JCM 1131 / KCTC 3163 / NCIMB 11718 / NCTC 13722 / AM63)</name>
    <dbReference type="NCBI Taxonomy" id="324831"/>
    <lineage>
        <taxon>Bacteria</taxon>
        <taxon>Bacillati</taxon>
        <taxon>Bacillota</taxon>
        <taxon>Bacilli</taxon>
        <taxon>Lactobacillales</taxon>
        <taxon>Lactobacillaceae</taxon>
        <taxon>Lactobacillus</taxon>
    </lineage>
</organism>